<dbReference type="EC" id="5.4.99.12" evidence="1"/>
<dbReference type="EMBL" id="FM178379">
    <property type="protein sequence ID" value="CAQ78760.1"/>
    <property type="molecule type" value="Genomic_DNA"/>
</dbReference>
<dbReference type="RefSeq" id="WP_012549830.1">
    <property type="nucleotide sequence ID" value="NC_011312.1"/>
</dbReference>
<dbReference type="SMR" id="B6EIW6"/>
<dbReference type="KEGG" id="vsa:VSAL_I1075"/>
<dbReference type="eggNOG" id="COG0101">
    <property type="taxonomic scope" value="Bacteria"/>
</dbReference>
<dbReference type="HOGENOM" id="CLU_014673_0_2_6"/>
<dbReference type="Proteomes" id="UP000001730">
    <property type="component" value="Chromosome 1"/>
</dbReference>
<dbReference type="GO" id="GO:0003723">
    <property type="term" value="F:RNA binding"/>
    <property type="evidence" value="ECO:0007669"/>
    <property type="project" value="InterPro"/>
</dbReference>
<dbReference type="GO" id="GO:0160147">
    <property type="term" value="F:tRNA pseudouridine(38-40) synthase activity"/>
    <property type="evidence" value="ECO:0007669"/>
    <property type="project" value="UniProtKB-EC"/>
</dbReference>
<dbReference type="GO" id="GO:0031119">
    <property type="term" value="P:tRNA pseudouridine synthesis"/>
    <property type="evidence" value="ECO:0007669"/>
    <property type="project" value="UniProtKB-UniRule"/>
</dbReference>
<dbReference type="CDD" id="cd02570">
    <property type="entry name" value="PseudoU_synth_EcTruA"/>
    <property type="match status" value="1"/>
</dbReference>
<dbReference type="FunFam" id="3.30.70.580:FF:000001">
    <property type="entry name" value="tRNA pseudouridine synthase A"/>
    <property type="match status" value="1"/>
</dbReference>
<dbReference type="FunFam" id="3.30.70.660:FF:000001">
    <property type="entry name" value="tRNA pseudouridine synthase A"/>
    <property type="match status" value="1"/>
</dbReference>
<dbReference type="Gene3D" id="3.30.70.660">
    <property type="entry name" value="Pseudouridine synthase I, catalytic domain, C-terminal subdomain"/>
    <property type="match status" value="1"/>
</dbReference>
<dbReference type="Gene3D" id="3.30.70.580">
    <property type="entry name" value="Pseudouridine synthase I, catalytic domain, N-terminal subdomain"/>
    <property type="match status" value="1"/>
</dbReference>
<dbReference type="HAMAP" id="MF_00171">
    <property type="entry name" value="TruA"/>
    <property type="match status" value="1"/>
</dbReference>
<dbReference type="InterPro" id="IPR020103">
    <property type="entry name" value="PsdUridine_synth_cat_dom_sf"/>
</dbReference>
<dbReference type="InterPro" id="IPR001406">
    <property type="entry name" value="PsdUridine_synth_TruA"/>
</dbReference>
<dbReference type="InterPro" id="IPR020097">
    <property type="entry name" value="PsdUridine_synth_TruA_a/b_dom"/>
</dbReference>
<dbReference type="InterPro" id="IPR020095">
    <property type="entry name" value="PsdUridine_synth_TruA_C"/>
</dbReference>
<dbReference type="InterPro" id="IPR020094">
    <property type="entry name" value="TruA/RsuA/RluB/E/F_N"/>
</dbReference>
<dbReference type="NCBIfam" id="TIGR00071">
    <property type="entry name" value="hisT_truA"/>
    <property type="match status" value="1"/>
</dbReference>
<dbReference type="PANTHER" id="PTHR11142">
    <property type="entry name" value="PSEUDOURIDYLATE SYNTHASE"/>
    <property type="match status" value="1"/>
</dbReference>
<dbReference type="PANTHER" id="PTHR11142:SF0">
    <property type="entry name" value="TRNA PSEUDOURIDINE SYNTHASE-LIKE 1"/>
    <property type="match status" value="1"/>
</dbReference>
<dbReference type="Pfam" id="PF01416">
    <property type="entry name" value="PseudoU_synth_1"/>
    <property type="match status" value="2"/>
</dbReference>
<dbReference type="PIRSF" id="PIRSF001430">
    <property type="entry name" value="tRNA_psdUrid_synth"/>
    <property type="match status" value="1"/>
</dbReference>
<dbReference type="SUPFAM" id="SSF55120">
    <property type="entry name" value="Pseudouridine synthase"/>
    <property type="match status" value="1"/>
</dbReference>
<reference key="1">
    <citation type="journal article" date="2008" name="BMC Genomics">
        <title>The genome sequence of the fish pathogen Aliivibrio salmonicida strain LFI1238 shows extensive evidence of gene decay.</title>
        <authorList>
            <person name="Hjerde E."/>
            <person name="Lorentzen M.S."/>
            <person name="Holden M.T."/>
            <person name="Seeger K."/>
            <person name="Paulsen S."/>
            <person name="Bason N."/>
            <person name="Churcher C."/>
            <person name="Harris D."/>
            <person name="Norbertczak H."/>
            <person name="Quail M.A."/>
            <person name="Sanders S."/>
            <person name="Thurston S."/>
            <person name="Parkhill J."/>
            <person name="Willassen N.P."/>
            <person name="Thomson N.R."/>
        </authorList>
    </citation>
    <scope>NUCLEOTIDE SEQUENCE [LARGE SCALE GENOMIC DNA]</scope>
    <source>
        <strain>LFI1238</strain>
    </source>
</reference>
<keyword id="KW-0413">Isomerase</keyword>
<keyword id="KW-0819">tRNA processing</keyword>
<evidence type="ECO:0000255" key="1">
    <source>
        <dbReference type="HAMAP-Rule" id="MF_00171"/>
    </source>
</evidence>
<name>TRUA_ALISL</name>
<protein>
    <recommendedName>
        <fullName evidence="1">tRNA pseudouridine synthase A</fullName>
        <ecNumber evidence="1">5.4.99.12</ecNumber>
    </recommendedName>
    <alternativeName>
        <fullName evidence="1">tRNA pseudouridine(38-40) synthase</fullName>
    </alternativeName>
    <alternativeName>
        <fullName evidence="1">tRNA pseudouridylate synthase I</fullName>
    </alternativeName>
    <alternativeName>
        <fullName evidence="1">tRNA-uridine isomerase I</fullName>
    </alternativeName>
</protein>
<gene>
    <name evidence="1" type="primary">truA</name>
    <name type="ordered locus">VSAL_I1075</name>
</gene>
<organism>
    <name type="scientific">Aliivibrio salmonicida (strain LFI1238)</name>
    <name type="common">Vibrio salmonicida (strain LFI1238)</name>
    <dbReference type="NCBI Taxonomy" id="316275"/>
    <lineage>
        <taxon>Bacteria</taxon>
        <taxon>Pseudomonadati</taxon>
        <taxon>Pseudomonadota</taxon>
        <taxon>Gammaproteobacteria</taxon>
        <taxon>Vibrionales</taxon>
        <taxon>Vibrionaceae</taxon>
        <taxon>Aliivibrio</taxon>
    </lineage>
</organism>
<accession>B6EIW6</accession>
<comment type="function">
    <text evidence="1">Formation of pseudouridine at positions 38, 39 and 40 in the anticodon stem and loop of transfer RNAs.</text>
</comment>
<comment type="catalytic activity">
    <reaction evidence="1">
        <text>uridine(38/39/40) in tRNA = pseudouridine(38/39/40) in tRNA</text>
        <dbReference type="Rhea" id="RHEA:22376"/>
        <dbReference type="Rhea" id="RHEA-COMP:10085"/>
        <dbReference type="Rhea" id="RHEA-COMP:10087"/>
        <dbReference type="ChEBI" id="CHEBI:65314"/>
        <dbReference type="ChEBI" id="CHEBI:65315"/>
        <dbReference type="EC" id="5.4.99.12"/>
    </reaction>
</comment>
<comment type="subunit">
    <text evidence="1">Homodimer.</text>
</comment>
<comment type="similarity">
    <text evidence="1">Belongs to the tRNA pseudouridine synthase TruA family.</text>
</comment>
<sequence length="262" mass="29941">MRIALCIEYDGASYHGWQSQKDVTSVQEELEKALMVVANEPIEVMCAGRTDAGVHGTGQVVHFDTNSVRKLPVWMVGVNANLPKNIAVRWVKEVNEDFHARFTATARRYRYIIFNNRQRPAIFSHGVSHYHETLDADLMHEAGQYLLGENDFTSFRAVRCQSRTPWRNLIHLKVTRHGDFIVIDIKANAFVHHMVRNITGSLIEVGRGKQKPEWVQWLLEAKDRKLAGATAKAEGLYLIDVDYPKEWDLPRVPLGPLFLPDN</sequence>
<proteinExistence type="inferred from homology"/>
<feature type="chain" id="PRO_1000097716" description="tRNA pseudouridine synthase A">
    <location>
        <begin position="1"/>
        <end position="262"/>
    </location>
</feature>
<feature type="active site" description="Nucleophile" evidence="1">
    <location>
        <position position="51"/>
    </location>
</feature>
<feature type="binding site" evidence="1">
    <location>
        <position position="109"/>
    </location>
    <ligand>
        <name>substrate</name>
    </ligand>
</feature>